<sequence>MDFPGLGALGTSEPLPQFVDSALVSSPSDSTGFFSSGPEGLDAASSSTSPNAATAAASALAYYREAEAYRHSPVFQVYPLLNSMEGIPGGSPYASWAYGKTALYPASTVCPSHEDAPSQALEDQEGKSNNTFLDTLKTERLSPDLLTLGTALPASLPVTGSAYGGADFPSPFFSPTGSPLSSAAYSSPKFHGSLPLAPCEARECVNCGATATPLWRRDRTGHYLCNACGLYHKMNGQNRPLIRPKKRMIVSKRAGTQCTNCQTTTTTLWRRNASGDPVCNACGLYFKLHQVNRPLTMRKDGIQTRNRKASGKGKKKRGSNLAGAGAAEGPAGGFMVVAGSSSSGNCGEVASGLALGTAGTAHLYQGLGPVVLSGPVSHLMPFPGPLLGSPTTSFPTGPAPTTSSTSVIAPLSS</sequence>
<organism>
    <name type="scientific">Mus musculus</name>
    <name type="common">Mouse</name>
    <dbReference type="NCBI Taxonomy" id="10090"/>
    <lineage>
        <taxon>Eukaryota</taxon>
        <taxon>Metazoa</taxon>
        <taxon>Chordata</taxon>
        <taxon>Craniata</taxon>
        <taxon>Vertebrata</taxon>
        <taxon>Euteleostomi</taxon>
        <taxon>Mammalia</taxon>
        <taxon>Eutheria</taxon>
        <taxon>Euarchontoglires</taxon>
        <taxon>Glires</taxon>
        <taxon>Rodentia</taxon>
        <taxon>Myomorpha</taxon>
        <taxon>Muroidea</taxon>
        <taxon>Muridae</taxon>
        <taxon>Murinae</taxon>
        <taxon>Mus</taxon>
        <taxon>Mus</taxon>
    </lineage>
</organism>
<accession>P17679</accession>
<accession>Q3UIH9</accession>
<accession>Q7TMX8</accession>
<protein>
    <recommendedName>
        <fullName>Erythroid transcription factor</fullName>
    </recommendedName>
    <alternativeName>
        <fullName>Eryf1</fullName>
    </alternativeName>
    <alternativeName>
        <fullName>GATA-binding factor 1</fullName>
        <shortName>GATA-1</shortName>
        <shortName>GF-1</shortName>
    </alternativeName>
    <alternativeName>
        <fullName>NF-E1 DNA-binding protein</fullName>
    </alternativeName>
</protein>
<proteinExistence type="evidence at protein level"/>
<dbReference type="EMBL" id="X15763">
    <property type="protein sequence ID" value="CAA33769.1"/>
    <property type="molecule type" value="mRNA"/>
</dbReference>
<dbReference type="EMBL" id="AK146915">
    <property type="protein sequence ID" value="BAE27527.1"/>
    <property type="molecule type" value="mRNA"/>
</dbReference>
<dbReference type="EMBL" id="AL670169">
    <property type="status" value="NOT_ANNOTATED_CDS"/>
    <property type="molecule type" value="Genomic_DNA"/>
</dbReference>
<dbReference type="EMBL" id="CH466638">
    <property type="protein sequence ID" value="EDL33938.1"/>
    <property type="molecule type" value="Genomic_DNA"/>
</dbReference>
<dbReference type="EMBL" id="X57530">
    <property type="protein sequence ID" value="CAA40751.1"/>
    <property type="molecule type" value="Genomic_DNA"/>
</dbReference>
<dbReference type="EMBL" id="BC052653">
    <property type="protein sequence ID" value="AAH52653.1"/>
    <property type="molecule type" value="mRNA"/>
</dbReference>
<dbReference type="CCDS" id="CCDS29981.1">
    <molecule id="P17679-1"/>
</dbReference>
<dbReference type="PIR" id="S04655">
    <property type="entry name" value="S04655"/>
</dbReference>
<dbReference type="RefSeq" id="NP_001397532.1">
    <molecule id="P17679-1"/>
    <property type="nucleotide sequence ID" value="NM_001410603.1"/>
</dbReference>
<dbReference type="RefSeq" id="NP_001397533.1">
    <molecule id="P17679-1"/>
    <property type="nucleotide sequence ID" value="NM_001410604.1"/>
</dbReference>
<dbReference type="RefSeq" id="NP_032115.1">
    <molecule id="P17679-1"/>
    <property type="nucleotide sequence ID" value="NM_008089.3"/>
</dbReference>
<dbReference type="RefSeq" id="XP_011245750.1">
    <property type="nucleotide sequence ID" value="XM_011247448.2"/>
</dbReference>
<dbReference type="PDB" id="1GNF">
    <property type="method" value="NMR"/>
    <property type="chains" value="A=200-243"/>
</dbReference>
<dbReference type="PDB" id="1Y0J">
    <property type="method" value="NMR"/>
    <property type="chains" value="A=200-243"/>
</dbReference>
<dbReference type="PDB" id="2L5E">
    <property type="method" value="NMR"/>
    <property type="chains" value="B=308-320"/>
</dbReference>
<dbReference type="PDB" id="2L6Y">
    <property type="method" value="NMR"/>
    <property type="chains" value="A=200-238"/>
</dbReference>
<dbReference type="PDB" id="2L6Z">
    <property type="method" value="NMR"/>
    <property type="chains" value="A=200-238"/>
</dbReference>
<dbReference type="PDB" id="3VD6">
    <property type="method" value="X-ray"/>
    <property type="resolution" value="1.98 A"/>
    <property type="chains" value="C=200-318"/>
</dbReference>
<dbReference type="PDB" id="3VEK">
    <property type="method" value="X-ray"/>
    <property type="resolution" value="2.63 A"/>
    <property type="chains" value="C/F=200-318"/>
</dbReference>
<dbReference type="PDBsum" id="1GNF"/>
<dbReference type="PDBsum" id="1Y0J"/>
<dbReference type="PDBsum" id="2L5E"/>
<dbReference type="PDBsum" id="2L6Y"/>
<dbReference type="PDBsum" id="2L6Z"/>
<dbReference type="PDBsum" id="3VD6"/>
<dbReference type="PDBsum" id="3VEK"/>
<dbReference type="SMR" id="P17679"/>
<dbReference type="BioGRID" id="199838">
    <property type="interactions" value="23"/>
</dbReference>
<dbReference type="CORUM" id="P17679"/>
<dbReference type="DIP" id="DIP-40883N"/>
<dbReference type="FunCoup" id="P17679">
    <property type="interactions" value="145"/>
</dbReference>
<dbReference type="IntAct" id="P17679">
    <property type="interactions" value="10"/>
</dbReference>
<dbReference type="MINT" id="P17679"/>
<dbReference type="STRING" id="10090.ENSMUSP00000033502"/>
<dbReference type="GlyGen" id="P17679">
    <property type="glycosylation" value="1 site"/>
</dbReference>
<dbReference type="iPTMnet" id="P17679"/>
<dbReference type="PhosphoSitePlus" id="P17679"/>
<dbReference type="PaxDb" id="10090-ENSMUSP00000033502"/>
<dbReference type="ProteomicsDB" id="267766">
    <molecule id="P17679-1"/>
</dbReference>
<dbReference type="ProteomicsDB" id="267767">
    <molecule id="P17679-2"/>
</dbReference>
<dbReference type="ABCD" id="P17679">
    <property type="antibodies" value="30 sequenced antibodies"/>
</dbReference>
<dbReference type="Antibodypedia" id="372">
    <property type="antibodies" value="977 antibodies from 47 providers"/>
</dbReference>
<dbReference type="DNASU" id="14460"/>
<dbReference type="Ensembl" id="ENSMUST00000033502.14">
    <molecule id="P17679-1"/>
    <property type="protein sequence ID" value="ENSMUSP00000033502.8"/>
    <property type="gene ID" value="ENSMUSG00000031162.15"/>
</dbReference>
<dbReference type="GeneID" id="14460"/>
<dbReference type="KEGG" id="mmu:14460"/>
<dbReference type="UCSC" id="uc009snl.2">
    <molecule id="P17679-1"/>
    <property type="organism name" value="mouse"/>
</dbReference>
<dbReference type="AGR" id="MGI:95661"/>
<dbReference type="CTD" id="2623"/>
<dbReference type="MGI" id="MGI:95661">
    <property type="gene designation" value="Gata1"/>
</dbReference>
<dbReference type="VEuPathDB" id="HostDB:ENSMUSG00000031162"/>
<dbReference type="eggNOG" id="KOG1601">
    <property type="taxonomic scope" value="Eukaryota"/>
</dbReference>
<dbReference type="GeneTree" id="ENSGT00940000161156"/>
<dbReference type="HOGENOM" id="CLU_027524_1_1_1"/>
<dbReference type="InParanoid" id="P17679"/>
<dbReference type="OMA" id="YSKTGLY"/>
<dbReference type="OrthoDB" id="515401at2759"/>
<dbReference type="PhylomeDB" id="P17679"/>
<dbReference type="TreeFam" id="TF315391"/>
<dbReference type="Reactome" id="R-MMU-8936459">
    <property type="pathway name" value="RUNX1 regulates genes involved in megakaryocyte differentiation and platelet function"/>
</dbReference>
<dbReference type="Reactome" id="R-MMU-8939236">
    <property type="pathway name" value="RUNX1 regulates transcription of genes involved in differentiation of HSCs"/>
</dbReference>
<dbReference type="Reactome" id="R-MMU-983231">
    <property type="pathway name" value="Factors involved in megakaryocyte development and platelet production"/>
</dbReference>
<dbReference type="BioGRID-ORCS" id="14460">
    <property type="hits" value="1 hit in 79 CRISPR screens"/>
</dbReference>
<dbReference type="ChiTaRS" id="Gata1">
    <property type="organism name" value="mouse"/>
</dbReference>
<dbReference type="EvolutionaryTrace" id="P17679"/>
<dbReference type="PRO" id="PR:P17679"/>
<dbReference type="Proteomes" id="UP000000589">
    <property type="component" value="Chromosome X"/>
</dbReference>
<dbReference type="RNAct" id="P17679">
    <property type="molecule type" value="protein"/>
</dbReference>
<dbReference type="Bgee" id="ENSMUSG00000031162">
    <property type="expression patterns" value="Expressed in fetal liver hematopoietic progenitor cell and 92 other cell types or tissues"/>
</dbReference>
<dbReference type="ExpressionAtlas" id="P17679">
    <property type="expression patterns" value="baseline and differential"/>
</dbReference>
<dbReference type="GO" id="GO:0005654">
    <property type="term" value="C:nucleoplasm"/>
    <property type="evidence" value="ECO:0007669"/>
    <property type="project" value="Ensembl"/>
</dbReference>
<dbReference type="GO" id="GO:0005634">
    <property type="term" value="C:nucleus"/>
    <property type="evidence" value="ECO:0000314"/>
    <property type="project" value="MGI"/>
</dbReference>
<dbReference type="GO" id="GO:0032993">
    <property type="term" value="C:protein-DNA complex"/>
    <property type="evidence" value="ECO:0007669"/>
    <property type="project" value="Ensembl"/>
</dbReference>
<dbReference type="GO" id="GO:0017053">
    <property type="term" value="C:transcription repressor complex"/>
    <property type="evidence" value="ECO:0007669"/>
    <property type="project" value="Ensembl"/>
</dbReference>
<dbReference type="GO" id="GO:0070742">
    <property type="term" value="F:C2H2 zinc finger domain binding"/>
    <property type="evidence" value="ECO:0007669"/>
    <property type="project" value="Ensembl"/>
</dbReference>
<dbReference type="GO" id="GO:0003682">
    <property type="term" value="F:chromatin binding"/>
    <property type="evidence" value="ECO:0000314"/>
    <property type="project" value="MGI"/>
</dbReference>
<dbReference type="GO" id="GO:0031490">
    <property type="term" value="F:chromatin DNA binding"/>
    <property type="evidence" value="ECO:0000250"/>
    <property type="project" value="UniProtKB"/>
</dbReference>
<dbReference type="GO" id="GO:0000987">
    <property type="term" value="F:cis-regulatory region sequence-specific DNA binding"/>
    <property type="evidence" value="ECO:0000314"/>
    <property type="project" value="UniProtKB"/>
</dbReference>
<dbReference type="GO" id="GO:0003677">
    <property type="term" value="F:DNA binding"/>
    <property type="evidence" value="ECO:0000314"/>
    <property type="project" value="MGI"/>
</dbReference>
<dbReference type="GO" id="GO:0008301">
    <property type="term" value="F:DNA binding, bending"/>
    <property type="evidence" value="ECO:0000314"/>
    <property type="project" value="MGI"/>
</dbReference>
<dbReference type="GO" id="GO:0001228">
    <property type="term" value="F:DNA-binding transcription activator activity, RNA polymerase II-specific"/>
    <property type="evidence" value="ECO:0000314"/>
    <property type="project" value="MGI"/>
</dbReference>
<dbReference type="GO" id="GO:0000981">
    <property type="term" value="F:DNA-binding transcription factor activity, RNA polymerase II-specific"/>
    <property type="evidence" value="ECO:0000314"/>
    <property type="project" value="MGI"/>
</dbReference>
<dbReference type="GO" id="GO:0002039">
    <property type="term" value="F:p53 binding"/>
    <property type="evidence" value="ECO:0000353"/>
    <property type="project" value="MGI"/>
</dbReference>
<dbReference type="GO" id="GO:0000978">
    <property type="term" value="F:RNA polymerase II cis-regulatory region sequence-specific DNA binding"/>
    <property type="evidence" value="ECO:0000314"/>
    <property type="project" value="MGI"/>
</dbReference>
<dbReference type="GO" id="GO:0061629">
    <property type="term" value="F:RNA polymerase II-specific DNA-binding transcription factor binding"/>
    <property type="evidence" value="ECO:0000353"/>
    <property type="project" value="BHF-UCL"/>
</dbReference>
<dbReference type="GO" id="GO:0043565">
    <property type="term" value="F:sequence-specific DNA binding"/>
    <property type="evidence" value="ECO:0000314"/>
    <property type="project" value="MGI"/>
</dbReference>
<dbReference type="GO" id="GO:0001223">
    <property type="term" value="F:transcription coactivator binding"/>
    <property type="evidence" value="ECO:0000353"/>
    <property type="project" value="BHF-UCL"/>
</dbReference>
<dbReference type="GO" id="GO:0001221">
    <property type="term" value="F:transcription coregulator binding"/>
    <property type="evidence" value="ECO:0000353"/>
    <property type="project" value="BHF-UCL"/>
</dbReference>
<dbReference type="GO" id="GO:0008270">
    <property type="term" value="F:zinc ion binding"/>
    <property type="evidence" value="ECO:0007669"/>
    <property type="project" value="UniProtKB-KW"/>
</dbReference>
<dbReference type="GO" id="GO:0031100">
    <property type="term" value="P:animal organ regeneration"/>
    <property type="evidence" value="ECO:0007669"/>
    <property type="project" value="Ensembl"/>
</dbReference>
<dbReference type="GO" id="GO:0030221">
    <property type="term" value="P:basophil differentiation"/>
    <property type="evidence" value="ECO:0007669"/>
    <property type="project" value="Ensembl"/>
</dbReference>
<dbReference type="GO" id="GO:0030282">
    <property type="term" value="P:bone mineralization"/>
    <property type="evidence" value="ECO:0000315"/>
    <property type="project" value="MGI"/>
</dbReference>
<dbReference type="GO" id="GO:0048468">
    <property type="term" value="P:cell development"/>
    <property type="evidence" value="ECO:0000315"/>
    <property type="project" value="MGI"/>
</dbReference>
<dbReference type="GO" id="GO:0008283">
    <property type="term" value="P:cell population proliferation"/>
    <property type="evidence" value="ECO:0000315"/>
    <property type="project" value="MGI"/>
</dbReference>
<dbReference type="GO" id="GO:0007267">
    <property type="term" value="P:cell-cell signaling"/>
    <property type="evidence" value="ECO:0000315"/>
    <property type="project" value="MGI"/>
</dbReference>
<dbReference type="GO" id="GO:0071320">
    <property type="term" value="P:cellular response to cAMP"/>
    <property type="evidence" value="ECO:0007669"/>
    <property type="project" value="Ensembl"/>
</dbReference>
<dbReference type="GO" id="GO:0071372">
    <property type="term" value="P:cellular response to follicle-stimulating hormone stimulus"/>
    <property type="evidence" value="ECO:0007669"/>
    <property type="project" value="Ensembl"/>
</dbReference>
<dbReference type="GO" id="GO:0071222">
    <property type="term" value="P:cellular response to lipopolysaccharide"/>
    <property type="evidence" value="ECO:0007669"/>
    <property type="project" value="Ensembl"/>
</dbReference>
<dbReference type="GO" id="GO:0097028">
    <property type="term" value="P:dendritic cell differentiation"/>
    <property type="evidence" value="ECO:0000314"/>
    <property type="project" value="MGI"/>
</dbReference>
<dbReference type="GO" id="GO:0035162">
    <property type="term" value="P:embryonic hemopoiesis"/>
    <property type="evidence" value="ECO:0000315"/>
    <property type="project" value="MGI"/>
</dbReference>
<dbReference type="GO" id="GO:0035854">
    <property type="term" value="P:eosinophil fate commitment"/>
    <property type="evidence" value="ECO:0007669"/>
    <property type="project" value="Ensembl"/>
</dbReference>
<dbReference type="GO" id="GO:0048821">
    <property type="term" value="P:erythrocyte development"/>
    <property type="evidence" value="ECO:0007669"/>
    <property type="project" value="Ensembl"/>
</dbReference>
<dbReference type="GO" id="GO:0030218">
    <property type="term" value="P:erythrocyte differentiation"/>
    <property type="evidence" value="ECO:0000314"/>
    <property type="project" value="MGI"/>
</dbReference>
<dbReference type="GO" id="GO:0048873">
    <property type="term" value="P:homeostasis of number of cells within a tissue"/>
    <property type="evidence" value="ECO:0000316"/>
    <property type="project" value="MGI"/>
</dbReference>
<dbReference type="GO" id="GO:0001701">
    <property type="term" value="P:in utero embryonic development"/>
    <property type="evidence" value="ECO:0000315"/>
    <property type="project" value="MGI"/>
</dbReference>
<dbReference type="GO" id="GO:0030219">
    <property type="term" value="P:megakaryocyte differentiation"/>
    <property type="evidence" value="ECO:0000314"/>
    <property type="project" value="MGI"/>
</dbReference>
<dbReference type="GO" id="GO:0033028">
    <property type="term" value="P:myeloid cell apoptotic process"/>
    <property type="evidence" value="ECO:0000315"/>
    <property type="project" value="MGI"/>
</dbReference>
<dbReference type="GO" id="GO:0030099">
    <property type="term" value="P:myeloid cell differentiation"/>
    <property type="evidence" value="ECO:0000315"/>
    <property type="project" value="MGI"/>
</dbReference>
<dbReference type="GO" id="GO:0030502">
    <property type="term" value="P:negative regulation of bone mineralization"/>
    <property type="evidence" value="ECO:0000315"/>
    <property type="project" value="MGI"/>
</dbReference>
<dbReference type="GO" id="GO:0008285">
    <property type="term" value="P:negative regulation of cell population proliferation"/>
    <property type="evidence" value="ECO:0000315"/>
    <property type="project" value="MGI"/>
</dbReference>
<dbReference type="GO" id="GO:2001240">
    <property type="term" value="P:negative regulation of extrinsic apoptotic signaling pathway in absence of ligand"/>
    <property type="evidence" value="ECO:0007669"/>
    <property type="project" value="Ensembl"/>
</dbReference>
<dbReference type="GO" id="GO:0033033">
    <property type="term" value="P:negative regulation of myeloid cell apoptotic process"/>
    <property type="evidence" value="ECO:0000315"/>
    <property type="project" value="MGI"/>
</dbReference>
<dbReference type="GO" id="GO:0000122">
    <property type="term" value="P:negative regulation of transcription by RNA polymerase II"/>
    <property type="evidence" value="ECO:0000314"/>
    <property type="project" value="MGI"/>
</dbReference>
<dbReference type="GO" id="GO:0033687">
    <property type="term" value="P:osteoblast proliferation"/>
    <property type="evidence" value="ECO:0000315"/>
    <property type="project" value="MGI"/>
</dbReference>
<dbReference type="GO" id="GO:0070527">
    <property type="term" value="P:platelet aggregation"/>
    <property type="evidence" value="ECO:0000315"/>
    <property type="project" value="BHF-UCL"/>
</dbReference>
<dbReference type="GO" id="GO:0030220">
    <property type="term" value="P:platelet formation"/>
    <property type="evidence" value="ECO:0000315"/>
    <property type="project" value="MGI"/>
</dbReference>
<dbReference type="GO" id="GO:0007204">
    <property type="term" value="P:positive regulation of cytosolic calcium ion concentration"/>
    <property type="evidence" value="ECO:0007669"/>
    <property type="project" value="Ensembl"/>
</dbReference>
<dbReference type="GO" id="GO:0045893">
    <property type="term" value="P:positive regulation of DNA-templated transcription"/>
    <property type="evidence" value="ECO:0000314"/>
    <property type="project" value="UniProtKB"/>
</dbReference>
<dbReference type="GO" id="GO:0045648">
    <property type="term" value="P:positive regulation of erythrocyte differentiation"/>
    <property type="evidence" value="ECO:0007669"/>
    <property type="project" value="Ensembl"/>
</dbReference>
<dbReference type="GO" id="GO:0043306">
    <property type="term" value="P:positive regulation of mast cell degranulation"/>
    <property type="evidence" value="ECO:0007669"/>
    <property type="project" value="Ensembl"/>
</dbReference>
<dbReference type="GO" id="GO:0033690">
    <property type="term" value="P:positive regulation of osteoblast proliferation"/>
    <property type="evidence" value="ECO:0000315"/>
    <property type="project" value="MGI"/>
</dbReference>
<dbReference type="GO" id="GO:0045944">
    <property type="term" value="P:positive regulation of transcription by RNA polymerase II"/>
    <property type="evidence" value="ECO:0000314"/>
    <property type="project" value="BHF-UCL"/>
</dbReference>
<dbReference type="GO" id="GO:0060319">
    <property type="term" value="P:primitive erythrocyte differentiation"/>
    <property type="evidence" value="ECO:0000315"/>
    <property type="project" value="MGI"/>
</dbReference>
<dbReference type="GO" id="GO:0010724">
    <property type="term" value="P:regulation of definitive erythrocyte differentiation"/>
    <property type="evidence" value="ECO:0000314"/>
    <property type="project" value="BHF-UCL"/>
</dbReference>
<dbReference type="GO" id="GO:0010559">
    <property type="term" value="P:regulation of glycoprotein biosynthetic process"/>
    <property type="evidence" value="ECO:0000315"/>
    <property type="project" value="BHF-UCL"/>
</dbReference>
<dbReference type="GO" id="GO:0010725">
    <property type="term" value="P:regulation of primitive erythrocyte differentiation"/>
    <property type="evidence" value="ECO:0000316"/>
    <property type="project" value="MGI"/>
</dbReference>
<dbReference type="GO" id="GO:0060009">
    <property type="term" value="P:Sertoli cell development"/>
    <property type="evidence" value="ECO:0007669"/>
    <property type="project" value="Ensembl"/>
</dbReference>
<dbReference type="GO" id="GO:0006366">
    <property type="term" value="P:transcription by RNA polymerase II"/>
    <property type="evidence" value="ECO:0000314"/>
    <property type="project" value="MGI"/>
</dbReference>
<dbReference type="CDD" id="cd00202">
    <property type="entry name" value="ZnF_GATA"/>
    <property type="match status" value="2"/>
</dbReference>
<dbReference type="FunFam" id="3.30.50.10:FF:000001">
    <property type="entry name" value="GATA transcription factor (GATAd)"/>
    <property type="match status" value="1"/>
</dbReference>
<dbReference type="FunFam" id="3.30.50.10:FF:000032">
    <property type="entry name" value="Transcription factor GATA-3"/>
    <property type="match status" value="1"/>
</dbReference>
<dbReference type="Gene3D" id="3.30.50.10">
    <property type="entry name" value="Erythroid Transcription Factor GATA-1, subunit A"/>
    <property type="match status" value="2"/>
</dbReference>
<dbReference type="IDEAL" id="IID50040"/>
<dbReference type="InterPro" id="IPR039355">
    <property type="entry name" value="Transcription_factor_GATA"/>
</dbReference>
<dbReference type="InterPro" id="IPR000679">
    <property type="entry name" value="Znf_GATA"/>
</dbReference>
<dbReference type="InterPro" id="IPR013088">
    <property type="entry name" value="Znf_NHR/GATA"/>
</dbReference>
<dbReference type="PANTHER" id="PTHR10071:SF190">
    <property type="entry name" value="ERYTHROID TRANSCRIPTION FACTOR"/>
    <property type="match status" value="1"/>
</dbReference>
<dbReference type="PANTHER" id="PTHR10071">
    <property type="entry name" value="TRANSCRIPTION FACTOR GATA FAMILY MEMBER"/>
    <property type="match status" value="1"/>
</dbReference>
<dbReference type="Pfam" id="PF00320">
    <property type="entry name" value="GATA"/>
    <property type="match status" value="2"/>
</dbReference>
<dbReference type="PRINTS" id="PR00619">
    <property type="entry name" value="GATAZNFINGER"/>
</dbReference>
<dbReference type="SMART" id="SM00401">
    <property type="entry name" value="ZnF_GATA"/>
    <property type="match status" value="2"/>
</dbReference>
<dbReference type="SUPFAM" id="SSF57716">
    <property type="entry name" value="Glucocorticoid receptor-like (DNA-binding domain)"/>
    <property type="match status" value="2"/>
</dbReference>
<dbReference type="PROSITE" id="PS00344">
    <property type="entry name" value="GATA_ZN_FINGER_1"/>
    <property type="match status" value="2"/>
</dbReference>
<dbReference type="PROSITE" id="PS50114">
    <property type="entry name" value="GATA_ZN_FINGER_2"/>
    <property type="match status" value="2"/>
</dbReference>
<comment type="function">
    <text evidence="2 7 10 13 16 17">Transcriptional activator or repressor which probably serves as a general switch factor for erythroid development. It binds to DNA sites with the consensus sequence 5'-[AT]GATA[AG]-3' within regulatory regions of globin genes and of other genes expressed in erythroid cells. Activates the transcription of genes involved in erythroid differentiation of K562 erythroleukemia cells, including HBB, HBG1/2, ALAS2 and HMBS (By similarity).</text>
</comment>
<comment type="subunit">
    <text evidence="2 6 7 8 9 11 12 14 17">May form homodimers or heterodimers with other isoforms. Interacts (via the N-terminal zinc finger) with ZFPM1 (By similarity). Interacts with GFI1B. Interacts with PIAS4; the interaction enhances sumoylation and represses the transactivational activity in a sumoylation-independent manner. Interacts with LMCD1. Interacts with CREBBP; the interaction stimulates acetylation and transcriptional activity in vivo. Interacts with BRD3. Interacts with MED1, CCAR1 and CALCOCO1. Interacts with EP300 (By similarity). Interacts with CEBPE (By similarity).</text>
</comment>
<comment type="interaction">
    <interactant intactId="EBI-3903251">
        <id>P17679</id>
    </interactant>
    <interactant intactId="EBI-3903256">
        <id>P25801</id>
        <label>Lmo2</label>
    </interactant>
    <organismsDiffer>false</organismsDiffer>
    <experiments>5</experiments>
</comment>
<comment type="interaction">
    <interactant intactId="EBI-3903251">
        <id>P17679</id>
    </interactant>
    <interactant intactId="EBI-971782">
        <id>P13405</id>
        <label>Rb1</label>
    </interactant>
    <organismsDiffer>false</organismsDiffer>
    <experiments>3</experiments>
</comment>
<comment type="interaction">
    <interactant intactId="EBI-3903251">
        <id>P17679</id>
    </interactant>
    <interactant intactId="EBI-8006437">
        <id>P22091</id>
        <label>Tal1</label>
    </interactant>
    <organismsDiffer>false</organismsDiffer>
    <experiments>2</experiments>
</comment>
<comment type="interaction">
    <interactant intactId="EBI-3903251">
        <id>P17679</id>
    </interactant>
    <interactant intactId="EBI-4394596">
        <id>O35615</id>
        <label>Zfpm1</label>
    </interactant>
    <organismsDiffer>false</organismsDiffer>
    <experiments>7</experiments>
</comment>
<comment type="interaction">
    <interactant intactId="EBI-3903251">
        <id>P17679</id>
    </interactant>
    <interactant intactId="EBI-110692">
        <id>Q9VPQ6</id>
        <label>ush</label>
    </interactant>
    <organismsDiffer>true</organismsDiffer>
    <experiments>2</experiments>
</comment>
<comment type="subcellular location">
    <subcellularLocation>
        <location evidence="10">Nucleus</location>
    </subcellularLocation>
</comment>
<comment type="alternative products">
    <event type="alternative initiation"/>
    <isoform>
        <id>P17679-1</id>
        <name>1</name>
        <sequence type="displayed"/>
    </isoform>
    <isoform>
        <id>P17679-2</id>
        <name>2</name>
        <name>GATA-1s</name>
        <sequence type="described" ref="VSP_041452"/>
    </isoform>
</comment>
<comment type="tissue specificity">
    <text evidence="15 17">Erythrocytes. Expressed (at protein level) in liver.</text>
</comment>
<comment type="developmental stage">
    <text evidence="17">Detected at 11.5-day fetal livers (at protein level). Isoform 2 detected earlier at 8.5-day embryo.</text>
</comment>
<comment type="domain">
    <text>The two fingers are functionally distinct and cooperate to achieve specific, stable DNA binding. The first finger is necessary only for full specificity and stability of binding, whereas the second one is required for binding.</text>
</comment>
<comment type="PTM">
    <text evidence="1">Highly phosphorylated on serine residues. Phosphorylation on Ser-310 is enhanced on erythroid differentiation. Phosphorylation on Ser-142 promotes sumoylation on Lys-137 (By similarity).</text>
</comment>
<comment type="PTM">
    <text evidence="7 16">Sumoylation on Lys-137 is enhanced by phosphorylation on Ser-142 and by interaction with PIAS4. Sumoylation with SUMO1 has no effect on transcriptional activity.</text>
</comment>
<comment type="PTM">
    <text evidence="1 6 11">Acetylated on Lys-233, Lys-245 Lys-246 by EP300 (By similarity). Acetylated on Lys-246, Lys-252 and Lys-312 by CREBBP in vitro. Acetylation does not affect DNA-binding in vitro but is essential to induce erythroid differentiation and for binding chromatin in vivo.</text>
</comment>
<comment type="miscellaneous">
    <molecule>Isoform 2</molecule>
    <text evidence="18">Produced by alternative initiation at Met-84 of isoform 1. Less effective than isoform 1 in its ability to transactivate target genes.</text>
</comment>
<gene>
    <name type="primary">Gata1</name>
    <name type="synonym">Gf-1</name>
</gene>
<feature type="chain" id="PRO_0000083398" description="Erythroid transcription factor">
    <location>
        <begin position="1"/>
        <end position="413"/>
    </location>
</feature>
<feature type="zinc finger region" description="GATA-type 1" evidence="3">
    <location>
        <begin position="204"/>
        <end position="228"/>
    </location>
</feature>
<feature type="zinc finger region" description="GATA-type 2" evidence="3">
    <location>
        <begin position="258"/>
        <end position="282"/>
    </location>
</feature>
<feature type="region of interest" description="Disordered" evidence="4">
    <location>
        <begin position="29"/>
        <end position="49"/>
    </location>
</feature>
<feature type="region of interest" description="Interaction with MED1 and CCAR1" evidence="14">
    <location>
        <begin position="200"/>
        <end position="330"/>
    </location>
</feature>
<feature type="region of interest" description="Required for interaction with ZFPM1" evidence="1">
    <location>
        <begin position="203"/>
        <end position="222"/>
    </location>
</feature>
<feature type="region of interest" description="Interaction with CALCOCO1" evidence="14">
    <location>
        <begin position="249"/>
        <end position="315"/>
    </location>
</feature>
<feature type="region of interest" description="Disordered" evidence="4">
    <location>
        <begin position="297"/>
        <end position="325"/>
    </location>
</feature>
<feature type="region of interest" description="Disordered" evidence="4">
    <location>
        <begin position="391"/>
        <end position="413"/>
    </location>
</feature>
<feature type="compositionally biased region" description="Basic residues" evidence="4">
    <location>
        <begin position="305"/>
        <end position="318"/>
    </location>
</feature>
<feature type="compositionally biased region" description="Low complexity" evidence="4">
    <location>
        <begin position="391"/>
        <end position="406"/>
    </location>
</feature>
<feature type="modified residue" description="Phosphoserine" evidence="16">
    <location>
        <position position="26"/>
    </location>
</feature>
<feature type="modified residue" description="Phosphoserine" evidence="16">
    <location>
        <position position="49"/>
    </location>
</feature>
<feature type="modified residue" description="Phosphoserine" evidence="16">
    <location>
        <position position="72"/>
    </location>
</feature>
<feature type="modified residue" description="Phosphoserine" evidence="16">
    <location>
        <position position="142"/>
    </location>
</feature>
<feature type="modified residue" description="Phosphoserine" evidence="16">
    <location>
        <position position="178"/>
    </location>
</feature>
<feature type="modified residue" description="Phosphoserine" evidence="16">
    <location>
        <position position="187"/>
    </location>
</feature>
<feature type="modified residue" description="N6-acetyllysine; by EP300" evidence="2">
    <location>
        <position position="233"/>
    </location>
</feature>
<feature type="modified residue" description="N6-acetyllysine; by EP300" evidence="2">
    <location>
        <position position="245"/>
    </location>
</feature>
<feature type="modified residue" description="N6-acetyllysine; by CREBBP" evidence="6">
    <location>
        <position position="246"/>
    </location>
</feature>
<feature type="modified residue" description="N6-acetyllysine; by EP300" evidence="1">
    <location>
        <position position="246"/>
    </location>
</feature>
<feature type="modified residue" description="N6-acetyllysine; by CREBBP" evidence="6">
    <location>
        <position position="252"/>
    </location>
</feature>
<feature type="modified residue" description="N6-acetyllysine" evidence="11">
    <location>
        <position position="308"/>
    </location>
</feature>
<feature type="modified residue" description="Phosphoserine" evidence="16">
    <location>
        <position position="310"/>
    </location>
</feature>
<feature type="modified residue" description="N6-acetyllysine; by CREBBP" evidence="6 11">
    <location>
        <position position="312"/>
    </location>
</feature>
<feature type="modified residue" description="N6-acetyllysine" evidence="11">
    <location>
        <position position="314"/>
    </location>
</feature>
<feature type="modified residue" description="N6-acetyllysine" evidence="11">
    <location>
        <position position="315"/>
    </location>
</feature>
<feature type="cross-link" description="Glycyl lysine isopeptide (Lys-Gly) (interchain with G-Cter in SUMO)" evidence="7">
    <location>
        <position position="137"/>
    </location>
</feature>
<feature type="splice variant" id="VSP_041452" description="In isoform 2." evidence="18">
    <location>
        <begin position="1"/>
        <end position="83"/>
    </location>
</feature>
<feature type="mutagenesis site" description="Loss of phosphorylation of the chymotryptic peptide." evidence="16">
    <original>S</original>
    <variation>A</variation>
    <location>
        <position position="26"/>
    </location>
</feature>
<feature type="mutagenesis site" description="Loss of phosphorylation of the chymotryptic peptide." evidence="16">
    <original>S</original>
    <variation>A</variation>
    <location>
        <position position="49"/>
    </location>
</feature>
<feature type="mutagenesis site" description="Loss of phosphorylation of the chymotryptic peptide." evidence="16">
    <original>S</original>
    <variation>A</variation>
    <location>
        <position position="72"/>
    </location>
</feature>
<feature type="mutagenesis site" description="Abolishes sumoylation. No change in PIAS4 binding nor on transcriptional activity." evidence="7">
    <original>K</original>
    <variation>R</variation>
    <location>
        <position position="137"/>
    </location>
</feature>
<feature type="mutagenesis site" description="Loss of phosphorylation of the chymotryptic peptide." evidence="16">
    <original>S</original>
    <variation>A</variation>
    <location>
        <position position="142"/>
    </location>
</feature>
<feature type="mutagenesis site" description="Loss of phosphorylation of the chymotryptic peptide." evidence="16">
    <original>S</original>
    <variation>A</variation>
    <location>
        <position position="178"/>
    </location>
</feature>
<feature type="mutagenesis site" description="Loss of phosphorylation of the chymotryptic peptide." evidence="16">
    <original>S</original>
    <variation>A</variation>
    <location>
        <position position="187"/>
    </location>
</feature>
<feature type="mutagenesis site" description="Disrupts interaction with ZFPM1. Binds normally to DNA." evidence="5">
    <original>E</original>
    <variation>V</variation>
    <location>
        <position position="203"/>
    </location>
</feature>
<feature type="mutagenesis site" description="Disrupts interaction with ZFPM1 and binding to DNA." evidence="5">
    <original>C</original>
    <variation>R</variation>
    <location>
        <position position="204"/>
    </location>
</feature>
<feature type="mutagenesis site" description="Disrupts interaction with ZFPM1. Binds normally to DNA." evidence="5">
    <original>V</original>
    <variation>G</variation>
    <location>
        <position position="205"/>
    </location>
</feature>
<feature type="mutagenesis site" description="Disrupts interaction with ZFPM1. Binds normally to DNA." evidence="5">
    <original>V</original>
    <variation>M</variation>
    <location>
        <position position="205"/>
    </location>
</feature>
<feature type="mutagenesis site" description="Disrupts interaction with ZFPM1." evidence="5 13">
    <original>C</original>
    <variation>G</variation>
    <variation>R</variation>
    <variation>W</variation>
    <location>
        <position position="207"/>
    </location>
</feature>
<feature type="mutagenesis site" description="Stability of binding to DNA reduced." evidence="5 13">
    <original>C</original>
    <variation>P</variation>
    <location>
        <position position="207"/>
    </location>
</feature>
<feature type="mutagenesis site" description="Disrupts interaction with ZFPM1 and binding to DNA." evidence="5">
    <original>G</original>
    <variation>E</variation>
    <variation>V</variation>
    <location>
        <position position="208"/>
    </location>
</feature>
<feature type="mutagenesis site" description="No effect on interaction with ZFPM1." evidence="5">
    <original>D</original>
    <variation>G</variation>
    <variation>V</variation>
    <location>
        <position position="218"/>
    </location>
</feature>
<feature type="mutagenesis site" description="Disrupts interaction with ZFPM1. Binds normally to DNA." evidence="5">
    <original>H</original>
    <variation>R</variation>
    <location>
        <position position="222"/>
    </location>
</feature>
<feature type="mutagenesis site" description="Disrupts interaction with ZFPM1 and binding to DNA." evidence="5">
    <original>L</original>
    <variation>P</variation>
    <location>
        <position position="224"/>
    </location>
</feature>
<feature type="mutagenesis site" description="Disrupts interaction with ZFPM1." evidence="5">
    <original>C</original>
    <variation>R</variation>
    <variation>S</variation>
    <variation>Y</variation>
    <location>
        <position position="225"/>
    </location>
</feature>
<feature type="mutagenesis site" description="Disrupts interaction with ZFPM1." evidence="5">
    <original>C</original>
    <variation>R</variation>
    <variation>S</variation>
    <location>
        <position position="228"/>
    </location>
</feature>
<feature type="mutagenesis site" description="Stability of binding to DNA reduced." evidence="13">
    <original>L</original>
    <variation>F</variation>
    <location>
        <position position="230"/>
    </location>
</feature>
<feature type="mutagenesis site" description="No effect on interaction with ZFPM1." evidence="5">
    <original>K</original>
    <variation>E</variation>
    <location>
        <position position="233"/>
    </location>
</feature>
<feature type="mutagenesis site" description="No effect on DNA binding. Reduces acetylation. Reduces ability to induce erythroid differentiation. Abrogates acetylation; when associated with 312-A--A-316. Abrogates ability to induce erythroid differentiation; when associated with 312-A--A-316. Reduces binding to CREBBP; when associated with 312-A--A-316. Disrupts stable association with chromatin; when associated with 312-A--A-316." evidence="6 10">
    <original>KK</original>
    <variation>AA</variation>
    <location>
        <begin position="245"/>
        <end position="246"/>
    </location>
</feature>
<feature type="mutagenesis site" description="No effect on DNA binding." evidence="6 10">
    <original>KK</original>
    <variation>RR</variation>
    <location>
        <begin position="245"/>
        <end position="246"/>
    </location>
</feature>
<feature type="mutagenesis site" description="Abolishes DNA-binding." evidence="13">
    <original>C</original>
    <variation>P</variation>
    <location>
        <position position="261"/>
    </location>
</feature>
<feature type="mutagenesis site" description="Binds to DNA with reduced affinity." evidence="13">
    <original>L</original>
    <variation>F</variation>
    <location>
        <position position="284"/>
    </location>
</feature>
<feature type="mutagenesis site" description="Loss of phosphorylation of the chymotryptic peptide." evidence="16">
    <original>S</original>
    <variation>A</variation>
    <location>
        <position position="310"/>
    </location>
</feature>
<feature type="mutagenesis site" description="No effect on DNA binding. Reduces acetylation. Reduces binding to CREBBP. Reduces ability to induce erythroid differentiation. Abrogates acetylation; when associated with 245-A-A-246. Abrogates ability to induce erythroid differentiation; when associated with 245-A-A-246. Reduces binding to CREBBP; when associated with 245-A-A-246. Disrupts stable association with chromatin; when associated with 245-A-A-246." evidence="6 10">
    <original>KGKKK</original>
    <variation>AGAAA</variation>
    <location>
        <begin position="312"/>
        <end position="316"/>
    </location>
</feature>
<feature type="mutagenesis site" description="No effect on DNA binding." evidence="6 10">
    <original>KGKKK</original>
    <variation>RGRRR</variation>
    <location>
        <begin position="312"/>
        <end position="316"/>
    </location>
</feature>
<feature type="sequence conflict" description="In Ref. 5; AAH52653." evidence="18" ref="5">
    <original>D</original>
    <variation>G</variation>
    <location>
        <position position="29"/>
    </location>
</feature>
<feature type="sequence conflict" description="In Ref. 5; AAH52653." evidence="18" ref="5">
    <original>N</original>
    <variation>S</variation>
    <location>
        <position position="129"/>
    </location>
</feature>
<feature type="turn" evidence="19">
    <location>
        <begin position="205"/>
        <end position="207"/>
    </location>
</feature>
<feature type="helix" evidence="19">
    <location>
        <begin position="226"/>
        <end position="235"/>
    </location>
</feature>
<feature type="turn" evidence="19">
    <location>
        <begin position="259"/>
        <end position="261"/>
    </location>
</feature>
<feature type="helix" evidence="19">
    <location>
        <begin position="280"/>
        <end position="289"/>
    </location>
</feature>
<feature type="helix" evidence="19">
    <location>
        <begin position="295"/>
        <end position="297"/>
    </location>
</feature>
<keyword id="KW-0002">3D-structure</keyword>
<keyword id="KW-0007">Acetylation</keyword>
<keyword id="KW-0010">Activator</keyword>
<keyword id="KW-0024">Alternative initiation</keyword>
<keyword id="KW-0903">Direct protein sequencing</keyword>
<keyword id="KW-0238">DNA-binding</keyword>
<keyword id="KW-1017">Isopeptide bond</keyword>
<keyword id="KW-0479">Metal-binding</keyword>
<keyword id="KW-0539">Nucleus</keyword>
<keyword id="KW-0597">Phosphoprotein</keyword>
<keyword id="KW-1185">Reference proteome</keyword>
<keyword id="KW-0677">Repeat</keyword>
<keyword id="KW-0678">Repressor</keyword>
<keyword id="KW-0804">Transcription</keyword>
<keyword id="KW-0805">Transcription regulation</keyword>
<keyword id="KW-0832">Ubl conjugation</keyword>
<keyword id="KW-0862">Zinc</keyword>
<keyword id="KW-0863">Zinc-finger</keyword>
<evidence type="ECO:0000250" key="1"/>
<evidence type="ECO:0000250" key="2">
    <source>
        <dbReference type="UniProtKB" id="P15976"/>
    </source>
</evidence>
<evidence type="ECO:0000255" key="3">
    <source>
        <dbReference type="PROSITE-ProRule" id="PRU00094"/>
    </source>
</evidence>
<evidence type="ECO:0000256" key="4">
    <source>
        <dbReference type="SAM" id="MobiDB-lite"/>
    </source>
</evidence>
<evidence type="ECO:0000269" key="5">
    <source>
    </source>
</evidence>
<evidence type="ECO:0000269" key="6">
    <source>
    </source>
</evidence>
<evidence type="ECO:0000269" key="7">
    <source>
    </source>
</evidence>
<evidence type="ECO:0000269" key="8">
    <source>
    </source>
</evidence>
<evidence type="ECO:0000269" key="9">
    <source>
    </source>
</evidence>
<evidence type="ECO:0000269" key="10">
    <source>
    </source>
</evidence>
<evidence type="ECO:0000269" key="11">
    <source>
    </source>
</evidence>
<evidence type="ECO:0000269" key="12">
    <source>
    </source>
</evidence>
<evidence type="ECO:0000269" key="13">
    <source>
    </source>
</evidence>
<evidence type="ECO:0000269" key="14">
    <source>
    </source>
</evidence>
<evidence type="ECO:0000269" key="15">
    <source>
    </source>
</evidence>
<evidence type="ECO:0000269" key="16">
    <source>
    </source>
</evidence>
<evidence type="ECO:0000269" key="17">
    <source>
    </source>
</evidence>
<evidence type="ECO:0000305" key="18"/>
<evidence type="ECO:0007829" key="19">
    <source>
        <dbReference type="PDB" id="3VD6"/>
    </source>
</evidence>
<reference key="1">
    <citation type="journal article" date="1989" name="Nature">
        <title>Cloning of cDNA for the major DNA-binding protein of the erythroid lineage through expression in mammalian cells.</title>
        <authorList>
            <person name="Tsai S.-F."/>
            <person name="Martin D.I.K."/>
            <person name="Zon L.I."/>
            <person name="D'Andrea A.D."/>
            <person name="Wong G.W."/>
            <person name="Orkin S.H."/>
        </authorList>
    </citation>
    <scope>NUCLEOTIDE SEQUENCE [MRNA] (ISOFORM 1)</scope>
    <scope>PARTIAL PROTEIN SEQUENCE</scope>
    <scope>TISSUE SPECIFICITY</scope>
    <source>
        <tissue>Erythrocyte</tissue>
    </source>
</reference>
<reference key="2">
    <citation type="journal article" date="2005" name="Science">
        <title>The transcriptional landscape of the mammalian genome.</title>
        <authorList>
            <person name="Carninci P."/>
            <person name="Kasukawa T."/>
            <person name="Katayama S."/>
            <person name="Gough J."/>
            <person name="Frith M.C."/>
            <person name="Maeda N."/>
            <person name="Oyama R."/>
            <person name="Ravasi T."/>
            <person name="Lenhard B."/>
            <person name="Wells C."/>
            <person name="Kodzius R."/>
            <person name="Shimokawa K."/>
            <person name="Bajic V.B."/>
            <person name="Brenner S.E."/>
            <person name="Batalov S."/>
            <person name="Forrest A.R."/>
            <person name="Zavolan M."/>
            <person name="Davis M.J."/>
            <person name="Wilming L.G."/>
            <person name="Aidinis V."/>
            <person name="Allen J.E."/>
            <person name="Ambesi-Impiombato A."/>
            <person name="Apweiler R."/>
            <person name="Aturaliya R.N."/>
            <person name="Bailey T.L."/>
            <person name="Bansal M."/>
            <person name="Baxter L."/>
            <person name="Beisel K.W."/>
            <person name="Bersano T."/>
            <person name="Bono H."/>
            <person name="Chalk A.M."/>
            <person name="Chiu K.P."/>
            <person name="Choudhary V."/>
            <person name="Christoffels A."/>
            <person name="Clutterbuck D.R."/>
            <person name="Crowe M.L."/>
            <person name="Dalla E."/>
            <person name="Dalrymple B.P."/>
            <person name="de Bono B."/>
            <person name="Della Gatta G."/>
            <person name="di Bernardo D."/>
            <person name="Down T."/>
            <person name="Engstrom P."/>
            <person name="Fagiolini M."/>
            <person name="Faulkner G."/>
            <person name="Fletcher C.F."/>
            <person name="Fukushima T."/>
            <person name="Furuno M."/>
            <person name="Futaki S."/>
            <person name="Gariboldi M."/>
            <person name="Georgii-Hemming P."/>
            <person name="Gingeras T.R."/>
            <person name="Gojobori T."/>
            <person name="Green R.E."/>
            <person name="Gustincich S."/>
            <person name="Harbers M."/>
            <person name="Hayashi Y."/>
            <person name="Hensch T.K."/>
            <person name="Hirokawa N."/>
            <person name="Hill D."/>
            <person name="Huminiecki L."/>
            <person name="Iacono M."/>
            <person name="Ikeo K."/>
            <person name="Iwama A."/>
            <person name="Ishikawa T."/>
            <person name="Jakt M."/>
            <person name="Kanapin A."/>
            <person name="Katoh M."/>
            <person name="Kawasawa Y."/>
            <person name="Kelso J."/>
            <person name="Kitamura H."/>
            <person name="Kitano H."/>
            <person name="Kollias G."/>
            <person name="Krishnan S.P."/>
            <person name="Kruger A."/>
            <person name="Kummerfeld S.K."/>
            <person name="Kurochkin I.V."/>
            <person name="Lareau L.F."/>
            <person name="Lazarevic D."/>
            <person name="Lipovich L."/>
            <person name="Liu J."/>
            <person name="Liuni S."/>
            <person name="McWilliam S."/>
            <person name="Madan Babu M."/>
            <person name="Madera M."/>
            <person name="Marchionni L."/>
            <person name="Matsuda H."/>
            <person name="Matsuzawa S."/>
            <person name="Miki H."/>
            <person name="Mignone F."/>
            <person name="Miyake S."/>
            <person name="Morris K."/>
            <person name="Mottagui-Tabar S."/>
            <person name="Mulder N."/>
            <person name="Nakano N."/>
            <person name="Nakauchi H."/>
            <person name="Ng P."/>
            <person name="Nilsson R."/>
            <person name="Nishiguchi S."/>
            <person name="Nishikawa S."/>
            <person name="Nori F."/>
            <person name="Ohara O."/>
            <person name="Okazaki Y."/>
            <person name="Orlando V."/>
            <person name="Pang K.C."/>
            <person name="Pavan W.J."/>
            <person name="Pavesi G."/>
            <person name="Pesole G."/>
            <person name="Petrovsky N."/>
            <person name="Piazza S."/>
            <person name="Reed J."/>
            <person name="Reid J.F."/>
            <person name="Ring B.Z."/>
            <person name="Ringwald M."/>
            <person name="Rost B."/>
            <person name="Ruan Y."/>
            <person name="Salzberg S.L."/>
            <person name="Sandelin A."/>
            <person name="Schneider C."/>
            <person name="Schoenbach C."/>
            <person name="Sekiguchi K."/>
            <person name="Semple C.A."/>
            <person name="Seno S."/>
            <person name="Sessa L."/>
            <person name="Sheng Y."/>
            <person name="Shibata Y."/>
            <person name="Shimada H."/>
            <person name="Shimada K."/>
            <person name="Silva D."/>
            <person name="Sinclair B."/>
            <person name="Sperling S."/>
            <person name="Stupka E."/>
            <person name="Sugiura K."/>
            <person name="Sultana R."/>
            <person name="Takenaka Y."/>
            <person name="Taki K."/>
            <person name="Tammoja K."/>
            <person name="Tan S.L."/>
            <person name="Tang S."/>
            <person name="Taylor M.S."/>
            <person name="Tegner J."/>
            <person name="Teichmann S.A."/>
            <person name="Ueda H.R."/>
            <person name="van Nimwegen E."/>
            <person name="Verardo R."/>
            <person name="Wei C.L."/>
            <person name="Yagi K."/>
            <person name="Yamanishi H."/>
            <person name="Zabarovsky E."/>
            <person name="Zhu S."/>
            <person name="Zimmer A."/>
            <person name="Hide W."/>
            <person name="Bult C."/>
            <person name="Grimmond S.M."/>
            <person name="Teasdale R.D."/>
            <person name="Liu E.T."/>
            <person name="Brusic V."/>
            <person name="Quackenbush J."/>
            <person name="Wahlestedt C."/>
            <person name="Mattick J.S."/>
            <person name="Hume D.A."/>
            <person name="Kai C."/>
            <person name="Sasaki D."/>
            <person name="Tomaru Y."/>
            <person name="Fukuda S."/>
            <person name="Kanamori-Katayama M."/>
            <person name="Suzuki M."/>
            <person name="Aoki J."/>
            <person name="Arakawa T."/>
            <person name="Iida J."/>
            <person name="Imamura K."/>
            <person name="Itoh M."/>
            <person name="Kato T."/>
            <person name="Kawaji H."/>
            <person name="Kawagashira N."/>
            <person name="Kawashima T."/>
            <person name="Kojima M."/>
            <person name="Kondo S."/>
            <person name="Konno H."/>
            <person name="Nakano K."/>
            <person name="Ninomiya N."/>
            <person name="Nishio T."/>
            <person name="Okada M."/>
            <person name="Plessy C."/>
            <person name="Shibata K."/>
            <person name="Shiraki T."/>
            <person name="Suzuki S."/>
            <person name="Tagami M."/>
            <person name="Waki K."/>
            <person name="Watahiki A."/>
            <person name="Okamura-Oho Y."/>
            <person name="Suzuki H."/>
            <person name="Kawai J."/>
            <person name="Hayashizaki Y."/>
        </authorList>
    </citation>
    <scope>NUCLEOTIDE SEQUENCE [LARGE SCALE MRNA] (ISOFORM 1)</scope>
    <source>
        <strain>C57BL/6J</strain>
        <tissue>Liver</tissue>
    </source>
</reference>
<reference key="3">
    <citation type="journal article" date="2009" name="PLoS Biol.">
        <title>Lineage-specific biology revealed by a finished genome assembly of the mouse.</title>
        <authorList>
            <person name="Church D.M."/>
            <person name="Goodstadt L."/>
            <person name="Hillier L.W."/>
            <person name="Zody M.C."/>
            <person name="Goldstein S."/>
            <person name="She X."/>
            <person name="Bult C.J."/>
            <person name="Agarwala R."/>
            <person name="Cherry J.L."/>
            <person name="DiCuccio M."/>
            <person name="Hlavina W."/>
            <person name="Kapustin Y."/>
            <person name="Meric P."/>
            <person name="Maglott D."/>
            <person name="Birtle Z."/>
            <person name="Marques A.C."/>
            <person name="Graves T."/>
            <person name="Zhou S."/>
            <person name="Teague B."/>
            <person name="Potamousis K."/>
            <person name="Churas C."/>
            <person name="Place M."/>
            <person name="Herschleb J."/>
            <person name="Runnheim R."/>
            <person name="Forrest D."/>
            <person name="Amos-Landgraf J."/>
            <person name="Schwartz D.C."/>
            <person name="Cheng Z."/>
            <person name="Lindblad-Toh K."/>
            <person name="Eichler E.E."/>
            <person name="Ponting C.P."/>
        </authorList>
    </citation>
    <scope>NUCLEOTIDE SEQUENCE [LARGE SCALE GENOMIC DNA]</scope>
    <source>
        <strain>C57BL/6J</strain>
    </source>
</reference>
<reference key="4">
    <citation type="submission" date="2005-07" db="EMBL/GenBank/DDBJ databases">
        <authorList>
            <person name="Mural R.J."/>
            <person name="Adams M.D."/>
            <person name="Myers E.W."/>
            <person name="Smith H.O."/>
            <person name="Venter J.C."/>
        </authorList>
    </citation>
    <scope>NUCLEOTIDE SEQUENCE [LARGE SCALE GENOMIC DNA]</scope>
</reference>
<reference key="5">
    <citation type="journal article" date="2004" name="Genome Res.">
        <title>The status, quality, and expansion of the NIH full-length cDNA project: the Mammalian Gene Collection (MGC).</title>
        <authorList>
            <consortium name="The MGC Project Team"/>
        </authorList>
    </citation>
    <scope>NUCLEOTIDE SEQUENCE [LARGE SCALE MRNA]</scope>
    <source>
        <strain>C57BL/6NCr</strain>
        <tissue>Hematopoietic stem cell</tissue>
    </source>
</reference>
<reference key="6">
    <citation type="submission" date="1995-05" db="EMBL/GenBank/DDBJ databases">
        <authorList>
            <person name="Todokoro K."/>
            <person name="Chiba T."/>
            <person name="Kuramochi S."/>
            <person name="Ikawa Y."/>
        </authorList>
    </citation>
    <scope>NUCLEOTIDE SEQUENCE [GENOMIC DNA] OF 1-73</scope>
    <source>
        <strain>BALB/cJ</strain>
    </source>
</reference>
<reference key="7">
    <citation type="journal article" date="2011" name="Proc. Natl. Acad. Sci. U.S.A.">
        <title>Bromodomain protein Brd3 associates with acetylated GATA1 to promote its chromatin occupancy at erythroid target genes.</title>
        <authorList>
            <person name="Lamonica J.M."/>
            <person name="Deng W."/>
            <person name="Kadauke S."/>
            <person name="Campbell A.E."/>
            <person name="Gamsjaeger R."/>
            <person name="Wang H."/>
            <person name="Cheng Y."/>
            <person name="Billin A.N."/>
            <person name="Hardison R.C."/>
            <person name="Mackay J.P."/>
            <person name="Blobel G.A."/>
        </authorList>
    </citation>
    <scope>PARTIAL PROTEIN SEQUENCE</scope>
    <scope>INTERACTION WITH BRD3</scope>
    <scope>ACETYLATION AT LYS-308; LYS-312; LYS-314 AND LYS-315</scope>
    <scope>IDENTIFICATION BY MASS SPECTROMETRY</scope>
</reference>
<reference key="8">
    <citation type="journal article" date="1990" name="Genes Dev.">
        <title>Transcriptional activation and DNA binding by the erythroid factor GF-1/NF-E1/Eryf 1.</title>
        <authorList>
            <person name="Martin D.I.K."/>
            <person name="Orkin S.H."/>
        </authorList>
    </citation>
    <scope>FUNCTION OF ZINC-FINGERS</scope>
    <scope>MUTAGENESIS OF CYS-207; LEU-230; CYS-261 AND LEU-284</scope>
</reference>
<reference key="9">
    <citation type="journal article" date="1994" name="J. Biol. Chem.">
        <title>Phosphorylation of the erythroid transcription factor GATA-1.</title>
        <authorList>
            <person name="Crossley M."/>
            <person name="Orkin S.H."/>
        </authorList>
    </citation>
    <scope>PHOSPHORYLATION AT SER-26; SER-49; SER-72; SER-142; SER-178; SER-187 AND SER-310</scope>
    <scope>FUNCTION</scope>
    <scope>MUTAGENESIS OF SER-26; SER-49; SER-72; SER-142; SER-178; SER-187 AND SER-310</scope>
</reference>
<reference key="10">
    <citation type="journal article" date="1995" name="Proc. Natl. Acad. Sci. U.S.A.">
        <title>Alternative translation initiation site usage results in two functionally distinct forms of the GATA-1 transcription factor.</title>
        <authorList>
            <person name="Calligaris R."/>
            <person name="Bottardi S."/>
            <person name="Cogoi S."/>
            <person name="Apezteguia I."/>
            <person name="Santoro C."/>
        </authorList>
    </citation>
    <scope>ALTERNATIVE INITIATION (ISOFORM 2)</scope>
    <scope>FUNCTION</scope>
    <scope>SUBUNIT</scope>
    <scope>TISSUE SPECIFICITY</scope>
    <scope>DEVELOPMENTAL STAGE</scope>
</reference>
<reference key="11">
    <citation type="journal article" date="1999" name="Mol. Cell">
        <title>Use of altered specificity mutants to probe a specific protein-protein interaction in differentiation: the GATA-1:FOG complex.</title>
        <authorList>
            <person name="Crispino J.D."/>
            <person name="Lodish M.B."/>
            <person name="MacKay J.P."/>
            <person name="Orkin S.H."/>
        </authorList>
    </citation>
    <scope>MUTAGENESIS OF GLU-203; CYS-204; VAL-205; CYS-207; GLY-208; ASP-218; HIS-222; LEU-224; CYS-225; CYS-228 AND LYS-233</scope>
</reference>
<reference key="12">
    <citation type="journal article" date="1999" name="Mol. Cell. Biol.">
        <title>CREB-Binding protein acetylates hematopoietic transcription factor GATA-1 at functionally important sites.</title>
        <authorList>
            <person name="Hung H.L."/>
            <person name="Lau J."/>
            <person name="Kim A.Y."/>
            <person name="Weiss M.J."/>
            <person name="Blobel G.A."/>
        </authorList>
    </citation>
    <scope>INTERACTION WITH CREBBP</scope>
    <scope>ACETYLATION AT LYS-246; LYS-252 AND LYS-312</scope>
    <scope>MUTAGENESIS OF 245-LYS-LYS-246 AND 312-LYS--LYS-316</scope>
</reference>
<reference key="13">
    <citation type="journal article" date="2004" name="Proc. Natl. Acad. Sci. U.S.A.">
        <title>Modification of the erythroid transcription factor GATA-1 by SUMO-1.</title>
        <authorList>
            <person name="Collavin L."/>
            <person name="Gostissa M."/>
            <person name="Avolio F."/>
            <person name="Secco P."/>
            <person name="Ronchi A."/>
            <person name="Santoro C."/>
            <person name="Del Sal G."/>
        </authorList>
    </citation>
    <scope>SUMOYLATION AT LYS-137</scope>
    <scope>INTERACTION WITH PIAS4</scope>
    <scope>FUNCTION</scope>
    <scope>MUTAGENESIS OF LYS-137</scope>
</reference>
<reference key="14">
    <citation type="journal article" date="2005" name="EMBO J.">
        <title>GATA-1 forms distinct activating and repressive complexes in erythroid cells.</title>
        <authorList>
            <person name="Rodriguez P."/>
            <person name="Bonte E."/>
            <person name="Krijgsveld J."/>
            <person name="Kolodziej K.E."/>
            <person name="Guyot B."/>
            <person name="Heck A.J.R."/>
            <person name="Vyas P."/>
            <person name="de Boer E."/>
            <person name="Grosveld F."/>
            <person name="Strouboulis J."/>
        </authorList>
    </citation>
    <scope>INTERACTION WITH GFI1B</scope>
</reference>
<reference key="15">
    <citation type="journal article" date="2005" name="Mol. Cell. Biol.">
        <title>LMCD1/Dyxin is a novel transcriptional cofactor that restricts GATA6 function by inhibiting DNA binding.</title>
        <authorList>
            <person name="Rath N."/>
            <person name="Wang Z."/>
            <person name="Lu M.M."/>
            <person name="Morrisey E.E."/>
        </authorList>
    </citation>
    <scope>INTERACTION WITH LMCD1</scope>
</reference>
<reference key="16">
    <citation type="journal article" date="2006" name="Blood">
        <title>Acetylation of GATA-1 is required for chromatin occupancy.</title>
        <authorList>
            <person name="Lamonica J.M."/>
            <person name="Vakoc C.R."/>
            <person name="Blobel G.A."/>
        </authorList>
    </citation>
    <scope>FUNCTION</scope>
    <scope>SUBCELLULAR LOCATION</scope>
    <scope>MUTAGENESIS OF 245-LYS-LYS-246 AND 312-LYS--LYS-316</scope>
</reference>
<reference key="17">
    <citation type="journal article" date="2014" name="Genes Cells">
        <title>CCAR1/CoCoA pair-mediated recruitment of the Mediator defines a novel pathway for GATA1 function.</title>
        <authorList>
            <person name="Mizuta S."/>
            <person name="Minami T."/>
            <person name="Fujita H."/>
            <person name="Kaminaga C."/>
            <person name="Matsui K."/>
            <person name="Ishino R."/>
            <person name="Fujita A."/>
            <person name="Oda K."/>
            <person name="Kawai A."/>
            <person name="Hasegawa N."/>
            <person name="Urahama N."/>
            <person name="Roeder R.G."/>
            <person name="Ito M."/>
        </authorList>
    </citation>
    <scope>INTERACTION WITH MED1; CCAR1 AND CALCOCO1</scope>
</reference>
<reference key="18">
    <citation type="journal article" date="1999" name="J. Biomol. NMR">
        <title>The solution structure of the N-terminal zinc finger of GATA-1 reveals a specific binding face for the transcriptional co-factor FOG.</title>
        <authorList>
            <person name="Kowalski K."/>
            <person name="Czolij R."/>
            <person name="King G.F."/>
            <person name="Crossley M."/>
            <person name="Mackay J.P."/>
        </authorList>
    </citation>
    <scope>STRUCTURE BY NMR OF 200-243</scope>
</reference>
<reference key="19">
    <citation type="journal article" date="2011" name="Mol. Cell. Biol.">
        <title>Structural basis and specificity of acetylated transcription factor GATA1 recognition by BET family bromodomain protein Brd3.</title>
        <authorList>
            <person name="Gamsjaeger R."/>
            <person name="Webb S.R."/>
            <person name="Lamonica J.M."/>
            <person name="Billin A."/>
            <person name="Blobel G.A."/>
            <person name="Mackay J.P."/>
        </authorList>
    </citation>
    <scope>STRUCTURE BY NMR OF 308-320 IN COMPLEX WITH BRD3</scope>
    <scope>INTERACTION WITH BRD3</scope>
</reference>
<name>GATA1_MOUSE</name>